<sequence>MSYIEKKDKVVYDAIQKEFQRQNSNIELIASENFVSQAVMEAQGSVLTNKYAEGYPGRRYYGGCEHVDVTESIAIERAKALFGAEHVNVQPHSGSQANMAVYLVALEMGDTVLGMNLSHGGHLTHGATVNFSGKFYHFVEYGVDQENELINYDEVRRLAIEHQPKLIVAGASAYSRTIDFKKFKEIADEVGAKLMVDMAHIAGLVAAGLHPNPVEYADFVTTTTHKTLRGPRGGMILCKEEYKKDIDKTIFPGIQGGPLEHVIAAKAVAFGEALNDDFKDYQNQVIKNAQALAQTLIEEGFRVVSGGTDNHLVAVDVKGSINMTGKLAEETLDKVGITCNKNTIPFDKEKPFVTSGVRLGTPAATTRGFDESAFVEVAKIISLALNNYDNDTKLNEAKERVHALTSKYPLYN</sequence>
<proteinExistence type="inferred from homology"/>
<protein>
    <recommendedName>
        <fullName evidence="1">Serine hydroxymethyltransferase</fullName>
        <shortName evidence="1">SHMT</shortName>
        <shortName evidence="1">Serine methylase</shortName>
        <ecNumber evidence="1">2.1.2.1</ecNumber>
    </recommendedName>
</protein>
<organism>
    <name type="scientific">Staphylococcus epidermidis (strain ATCC 35984 / DSM 28319 / BCRC 17069 / CCUG 31568 / BM 3577 / RP62A)</name>
    <dbReference type="NCBI Taxonomy" id="176279"/>
    <lineage>
        <taxon>Bacteria</taxon>
        <taxon>Bacillati</taxon>
        <taxon>Bacillota</taxon>
        <taxon>Bacilli</taxon>
        <taxon>Bacillales</taxon>
        <taxon>Staphylococcaceae</taxon>
        <taxon>Staphylococcus</taxon>
    </lineage>
</organism>
<dbReference type="EC" id="2.1.2.1" evidence="1"/>
<dbReference type="EMBL" id="CP000029">
    <property type="protein sequence ID" value="AAW55111.1"/>
    <property type="molecule type" value="Genomic_DNA"/>
</dbReference>
<dbReference type="RefSeq" id="WP_002468313.1">
    <property type="nucleotide sequence ID" value="NC_002976.3"/>
</dbReference>
<dbReference type="SMR" id="Q5HMB0"/>
<dbReference type="STRING" id="176279.SERP1719"/>
<dbReference type="GeneID" id="50018189"/>
<dbReference type="KEGG" id="ser:SERP1719"/>
<dbReference type="eggNOG" id="COG0112">
    <property type="taxonomic scope" value="Bacteria"/>
</dbReference>
<dbReference type="HOGENOM" id="CLU_022477_2_1_9"/>
<dbReference type="UniPathway" id="UPA00193"/>
<dbReference type="UniPathway" id="UPA00288">
    <property type="reaction ID" value="UER01023"/>
</dbReference>
<dbReference type="Proteomes" id="UP000000531">
    <property type="component" value="Chromosome"/>
</dbReference>
<dbReference type="GO" id="GO:0005829">
    <property type="term" value="C:cytosol"/>
    <property type="evidence" value="ECO:0007669"/>
    <property type="project" value="TreeGrafter"/>
</dbReference>
<dbReference type="GO" id="GO:0004372">
    <property type="term" value="F:glycine hydroxymethyltransferase activity"/>
    <property type="evidence" value="ECO:0007669"/>
    <property type="project" value="UniProtKB-UniRule"/>
</dbReference>
<dbReference type="GO" id="GO:0030170">
    <property type="term" value="F:pyridoxal phosphate binding"/>
    <property type="evidence" value="ECO:0007669"/>
    <property type="project" value="UniProtKB-UniRule"/>
</dbReference>
<dbReference type="GO" id="GO:0019264">
    <property type="term" value="P:glycine biosynthetic process from serine"/>
    <property type="evidence" value="ECO:0007669"/>
    <property type="project" value="UniProtKB-UniRule"/>
</dbReference>
<dbReference type="GO" id="GO:0035999">
    <property type="term" value="P:tetrahydrofolate interconversion"/>
    <property type="evidence" value="ECO:0007669"/>
    <property type="project" value="UniProtKB-UniRule"/>
</dbReference>
<dbReference type="CDD" id="cd00378">
    <property type="entry name" value="SHMT"/>
    <property type="match status" value="1"/>
</dbReference>
<dbReference type="FunFam" id="3.40.640.10:FF:000001">
    <property type="entry name" value="Serine hydroxymethyltransferase"/>
    <property type="match status" value="1"/>
</dbReference>
<dbReference type="FunFam" id="3.90.1150.10:FF:000003">
    <property type="entry name" value="Serine hydroxymethyltransferase"/>
    <property type="match status" value="1"/>
</dbReference>
<dbReference type="Gene3D" id="3.90.1150.10">
    <property type="entry name" value="Aspartate Aminotransferase, domain 1"/>
    <property type="match status" value="1"/>
</dbReference>
<dbReference type="Gene3D" id="3.40.640.10">
    <property type="entry name" value="Type I PLP-dependent aspartate aminotransferase-like (Major domain)"/>
    <property type="match status" value="1"/>
</dbReference>
<dbReference type="HAMAP" id="MF_00051">
    <property type="entry name" value="SHMT"/>
    <property type="match status" value="1"/>
</dbReference>
<dbReference type="InterPro" id="IPR015424">
    <property type="entry name" value="PyrdxlP-dep_Trfase"/>
</dbReference>
<dbReference type="InterPro" id="IPR015421">
    <property type="entry name" value="PyrdxlP-dep_Trfase_major"/>
</dbReference>
<dbReference type="InterPro" id="IPR015422">
    <property type="entry name" value="PyrdxlP-dep_Trfase_small"/>
</dbReference>
<dbReference type="InterPro" id="IPR001085">
    <property type="entry name" value="Ser_HO-MeTrfase"/>
</dbReference>
<dbReference type="InterPro" id="IPR049943">
    <property type="entry name" value="Ser_HO-MeTrfase-like"/>
</dbReference>
<dbReference type="InterPro" id="IPR019798">
    <property type="entry name" value="Ser_HO-MeTrfase_PLP_BS"/>
</dbReference>
<dbReference type="InterPro" id="IPR039429">
    <property type="entry name" value="SHMT-like_dom"/>
</dbReference>
<dbReference type="NCBIfam" id="NF000586">
    <property type="entry name" value="PRK00011.1"/>
    <property type="match status" value="1"/>
</dbReference>
<dbReference type="PANTHER" id="PTHR11680">
    <property type="entry name" value="SERINE HYDROXYMETHYLTRANSFERASE"/>
    <property type="match status" value="1"/>
</dbReference>
<dbReference type="PANTHER" id="PTHR11680:SF35">
    <property type="entry name" value="SERINE HYDROXYMETHYLTRANSFERASE 1"/>
    <property type="match status" value="1"/>
</dbReference>
<dbReference type="Pfam" id="PF00464">
    <property type="entry name" value="SHMT"/>
    <property type="match status" value="1"/>
</dbReference>
<dbReference type="PIRSF" id="PIRSF000412">
    <property type="entry name" value="SHMT"/>
    <property type="match status" value="1"/>
</dbReference>
<dbReference type="SUPFAM" id="SSF53383">
    <property type="entry name" value="PLP-dependent transferases"/>
    <property type="match status" value="1"/>
</dbReference>
<dbReference type="PROSITE" id="PS00096">
    <property type="entry name" value="SHMT"/>
    <property type="match status" value="1"/>
</dbReference>
<comment type="function">
    <text evidence="1">Catalyzes the reversible interconversion of serine and glycine with tetrahydrofolate (THF) serving as the one-carbon carrier. This reaction serves as the major source of one-carbon groups required for the biosynthesis of purines, thymidylate, methionine, and other important biomolecules. Also exhibits THF-independent aldolase activity toward beta-hydroxyamino acids, producing glycine and aldehydes, via a retro-aldol mechanism.</text>
</comment>
<comment type="catalytic activity">
    <reaction evidence="1">
        <text>(6R)-5,10-methylene-5,6,7,8-tetrahydrofolate + glycine + H2O = (6S)-5,6,7,8-tetrahydrofolate + L-serine</text>
        <dbReference type="Rhea" id="RHEA:15481"/>
        <dbReference type="ChEBI" id="CHEBI:15377"/>
        <dbReference type="ChEBI" id="CHEBI:15636"/>
        <dbReference type="ChEBI" id="CHEBI:33384"/>
        <dbReference type="ChEBI" id="CHEBI:57305"/>
        <dbReference type="ChEBI" id="CHEBI:57453"/>
        <dbReference type="EC" id="2.1.2.1"/>
    </reaction>
</comment>
<comment type="cofactor">
    <cofactor evidence="1">
        <name>pyridoxal 5'-phosphate</name>
        <dbReference type="ChEBI" id="CHEBI:597326"/>
    </cofactor>
</comment>
<comment type="pathway">
    <text evidence="1">One-carbon metabolism; tetrahydrofolate interconversion.</text>
</comment>
<comment type="pathway">
    <text evidence="1">Amino-acid biosynthesis; glycine biosynthesis; glycine from L-serine: step 1/1.</text>
</comment>
<comment type="subunit">
    <text evidence="1">Homodimer.</text>
</comment>
<comment type="subcellular location">
    <subcellularLocation>
        <location evidence="1">Cytoplasm</location>
    </subcellularLocation>
</comment>
<comment type="similarity">
    <text evidence="1">Belongs to the SHMT family.</text>
</comment>
<evidence type="ECO:0000255" key="1">
    <source>
        <dbReference type="HAMAP-Rule" id="MF_00051"/>
    </source>
</evidence>
<feature type="chain" id="PRO_0000113668" description="Serine hydroxymethyltransferase">
    <location>
        <begin position="1"/>
        <end position="412"/>
    </location>
</feature>
<feature type="binding site" evidence="1">
    <location>
        <position position="117"/>
    </location>
    <ligand>
        <name>(6S)-5,6,7,8-tetrahydrofolate</name>
        <dbReference type="ChEBI" id="CHEBI:57453"/>
    </ligand>
</feature>
<feature type="binding site" evidence="1">
    <location>
        <begin position="121"/>
        <end position="123"/>
    </location>
    <ligand>
        <name>(6S)-5,6,7,8-tetrahydrofolate</name>
        <dbReference type="ChEBI" id="CHEBI:57453"/>
    </ligand>
</feature>
<feature type="site" description="Plays an important role in substrate specificity" evidence="1">
    <location>
        <position position="225"/>
    </location>
</feature>
<feature type="modified residue" description="N6-(pyridoxal phosphate)lysine" evidence="1">
    <location>
        <position position="226"/>
    </location>
</feature>
<name>GLYA_STAEQ</name>
<gene>
    <name evidence="1" type="primary">glyA</name>
    <name type="ordered locus">SERP1719</name>
</gene>
<keyword id="KW-0028">Amino-acid biosynthesis</keyword>
<keyword id="KW-0963">Cytoplasm</keyword>
<keyword id="KW-0554">One-carbon metabolism</keyword>
<keyword id="KW-0663">Pyridoxal phosphate</keyword>
<keyword id="KW-1185">Reference proteome</keyword>
<keyword id="KW-0808">Transferase</keyword>
<accession>Q5HMB0</accession>
<reference key="1">
    <citation type="journal article" date="2005" name="J. Bacteriol.">
        <title>Insights on evolution of virulence and resistance from the complete genome analysis of an early methicillin-resistant Staphylococcus aureus strain and a biofilm-producing methicillin-resistant Staphylococcus epidermidis strain.</title>
        <authorList>
            <person name="Gill S.R."/>
            <person name="Fouts D.E."/>
            <person name="Archer G.L."/>
            <person name="Mongodin E.F."/>
            <person name="DeBoy R.T."/>
            <person name="Ravel J."/>
            <person name="Paulsen I.T."/>
            <person name="Kolonay J.F."/>
            <person name="Brinkac L.M."/>
            <person name="Beanan M.J."/>
            <person name="Dodson R.J."/>
            <person name="Daugherty S.C."/>
            <person name="Madupu R."/>
            <person name="Angiuoli S.V."/>
            <person name="Durkin A.S."/>
            <person name="Haft D.H."/>
            <person name="Vamathevan J.J."/>
            <person name="Khouri H."/>
            <person name="Utterback T.R."/>
            <person name="Lee C."/>
            <person name="Dimitrov G."/>
            <person name="Jiang L."/>
            <person name="Qin H."/>
            <person name="Weidman J."/>
            <person name="Tran K."/>
            <person name="Kang K.H."/>
            <person name="Hance I.R."/>
            <person name="Nelson K.E."/>
            <person name="Fraser C.M."/>
        </authorList>
    </citation>
    <scope>NUCLEOTIDE SEQUENCE [LARGE SCALE GENOMIC DNA]</scope>
    <source>
        <strain>ATCC 35984 / DSM 28319 / BCRC 17069 / CCUG 31568 / BM 3577 / RP62A</strain>
    </source>
</reference>